<dbReference type="EC" id="2.7.6.1"/>
<dbReference type="EMBL" id="CR859794">
    <property type="protein sequence ID" value="CAH91952.1"/>
    <property type="molecule type" value="mRNA"/>
</dbReference>
<dbReference type="RefSeq" id="NP_001128998.1">
    <property type="nucleotide sequence ID" value="NM_001135526.1"/>
</dbReference>
<dbReference type="SMR" id="Q5R8F8"/>
<dbReference type="FunCoup" id="Q5R8F8">
    <property type="interactions" value="1060"/>
</dbReference>
<dbReference type="STRING" id="9601.ENSPPYP00000022511"/>
<dbReference type="GeneID" id="100190838"/>
<dbReference type="KEGG" id="pon:100190838"/>
<dbReference type="CTD" id="5634"/>
<dbReference type="eggNOG" id="KOG1448">
    <property type="taxonomic scope" value="Eukaryota"/>
</dbReference>
<dbReference type="HOGENOM" id="CLU_033546_4_0_1"/>
<dbReference type="InParanoid" id="Q5R8F8"/>
<dbReference type="OrthoDB" id="413572at2759"/>
<dbReference type="UniPathway" id="UPA00087">
    <property type="reaction ID" value="UER00172"/>
</dbReference>
<dbReference type="Proteomes" id="UP000001595">
    <property type="component" value="Unplaced"/>
</dbReference>
<dbReference type="GO" id="GO:0005737">
    <property type="term" value="C:cytoplasm"/>
    <property type="evidence" value="ECO:0007669"/>
    <property type="project" value="TreeGrafter"/>
</dbReference>
<dbReference type="GO" id="GO:0002189">
    <property type="term" value="C:ribose phosphate diphosphokinase complex"/>
    <property type="evidence" value="ECO:0007669"/>
    <property type="project" value="TreeGrafter"/>
</dbReference>
<dbReference type="GO" id="GO:0005524">
    <property type="term" value="F:ATP binding"/>
    <property type="evidence" value="ECO:0000250"/>
    <property type="project" value="UniProtKB"/>
</dbReference>
<dbReference type="GO" id="GO:0016301">
    <property type="term" value="F:kinase activity"/>
    <property type="evidence" value="ECO:0007669"/>
    <property type="project" value="UniProtKB-KW"/>
</dbReference>
<dbReference type="GO" id="GO:0000287">
    <property type="term" value="F:magnesium ion binding"/>
    <property type="evidence" value="ECO:0007669"/>
    <property type="project" value="InterPro"/>
</dbReference>
<dbReference type="GO" id="GO:0042803">
    <property type="term" value="F:protein homodimerization activity"/>
    <property type="evidence" value="ECO:0000250"/>
    <property type="project" value="UniProtKB"/>
</dbReference>
<dbReference type="GO" id="GO:0004749">
    <property type="term" value="F:ribose phosphate diphosphokinase activity"/>
    <property type="evidence" value="ECO:0000250"/>
    <property type="project" value="UniProtKB"/>
</dbReference>
<dbReference type="GO" id="GO:0006015">
    <property type="term" value="P:5-phosphoribose 1-diphosphate biosynthetic process"/>
    <property type="evidence" value="ECO:0007669"/>
    <property type="project" value="UniProtKB-UniPathway"/>
</dbReference>
<dbReference type="GO" id="GO:0006164">
    <property type="term" value="P:purine nucleotide biosynthetic process"/>
    <property type="evidence" value="ECO:0007669"/>
    <property type="project" value="TreeGrafter"/>
</dbReference>
<dbReference type="GO" id="GO:0009156">
    <property type="term" value="P:ribonucleoside monophosphate biosynthetic process"/>
    <property type="evidence" value="ECO:0007669"/>
    <property type="project" value="InterPro"/>
</dbReference>
<dbReference type="CDD" id="cd06223">
    <property type="entry name" value="PRTases_typeI"/>
    <property type="match status" value="1"/>
</dbReference>
<dbReference type="FunFam" id="3.40.50.2020:FF:000031">
    <property type="entry name" value="Probable PRS4-ribose-phosphate pyrophosphokinase 3"/>
    <property type="match status" value="1"/>
</dbReference>
<dbReference type="FunFam" id="3.40.50.2020:FF:000005">
    <property type="entry name" value="Ribose-phosphate pyrophosphokinase 1"/>
    <property type="match status" value="1"/>
</dbReference>
<dbReference type="Gene3D" id="3.40.50.2020">
    <property type="match status" value="2"/>
</dbReference>
<dbReference type="HAMAP" id="MF_00583_B">
    <property type="entry name" value="RibP_PPkinase_B"/>
    <property type="match status" value="1"/>
</dbReference>
<dbReference type="InterPro" id="IPR000842">
    <property type="entry name" value="PRib_PP_synth_CS"/>
</dbReference>
<dbReference type="InterPro" id="IPR029099">
    <property type="entry name" value="Pribosyltran_N"/>
</dbReference>
<dbReference type="InterPro" id="IPR000836">
    <property type="entry name" value="PRibTrfase_dom"/>
</dbReference>
<dbReference type="InterPro" id="IPR029057">
    <property type="entry name" value="PRTase-like"/>
</dbReference>
<dbReference type="InterPro" id="IPR005946">
    <property type="entry name" value="Rib-P_diPkinase"/>
</dbReference>
<dbReference type="InterPro" id="IPR037515">
    <property type="entry name" value="Rib-P_diPkinase_bac"/>
</dbReference>
<dbReference type="NCBIfam" id="NF002320">
    <property type="entry name" value="PRK01259.1"/>
    <property type="match status" value="1"/>
</dbReference>
<dbReference type="NCBIfam" id="TIGR01251">
    <property type="entry name" value="ribP_PPkin"/>
    <property type="match status" value="1"/>
</dbReference>
<dbReference type="PANTHER" id="PTHR10210">
    <property type="entry name" value="RIBOSE-PHOSPHATE DIPHOSPHOKINASE FAMILY MEMBER"/>
    <property type="match status" value="1"/>
</dbReference>
<dbReference type="PANTHER" id="PTHR10210:SF32">
    <property type="entry name" value="RIBOSE-PHOSPHATE PYROPHOSPHOKINASE 2"/>
    <property type="match status" value="1"/>
</dbReference>
<dbReference type="Pfam" id="PF14572">
    <property type="entry name" value="Pribosyl_synth"/>
    <property type="match status" value="1"/>
</dbReference>
<dbReference type="Pfam" id="PF13793">
    <property type="entry name" value="Pribosyltran_N"/>
    <property type="match status" value="1"/>
</dbReference>
<dbReference type="SMART" id="SM01400">
    <property type="entry name" value="Pribosyltran_N"/>
    <property type="match status" value="1"/>
</dbReference>
<dbReference type="SUPFAM" id="SSF53271">
    <property type="entry name" value="PRTase-like"/>
    <property type="match status" value="1"/>
</dbReference>
<dbReference type="PROSITE" id="PS00114">
    <property type="entry name" value="PRPP_SYNTHASE"/>
    <property type="match status" value="1"/>
</dbReference>
<name>PRPS2_PONAB</name>
<accession>Q5R8F8</accession>
<keyword id="KW-0067">ATP-binding</keyword>
<keyword id="KW-0418">Kinase</keyword>
<keyword id="KW-0460">Magnesium</keyword>
<keyword id="KW-0479">Metal-binding</keyword>
<keyword id="KW-0545">Nucleotide biosynthesis</keyword>
<keyword id="KW-0547">Nucleotide-binding</keyword>
<keyword id="KW-1185">Reference proteome</keyword>
<keyword id="KW-0808">Transferase</keyword>
<protein>
    <recommendedName>
        <fullName>Ribose-phosphate pyrophosphokinase 2</fullName>
        <ecNumber>2.7.6.1</ecNumber>
    </recommendedName>
    <alternativeName>
        <fullName>Phosphoribosyl pyrophosphate synthase II</fullName>
        <shortName>PRS-II</shortName>
    </alternativeName>
</protein>
<reference key="1">
    <citation type="submission" date="2004-11" db="EMBL/GenBank/DDBJ databases">
        <authorList>
            <consortium name="The German cDNA consortium"/>
        </authorList>
    </citation>
    <scope>NUCLEOTIDE SEQUENCE [LARGE SCALE MRNA]</scope>
    <source>
        <tissue>Kidney</tissue>
    </source>
</reference>
<feature type="chain" id="PRO_0000290002" description="Ribose-phosphate pyrophosphokinase 2">
    <location>
        <begin position="1"/>
        <end position="318"/>
    </location>
</feature>
<feature type="region of interest" description="Binding of phosphoribosylpyrophosphate" evidence="2">
    <location>
        <begin position="212"/>
        <end position="227"/>
    </location>
</feature>
<feature type="binding site" evidence="1">
    <location>
        <begin position="96"/>
        <end position="101"/>
    </location>
    <ligand>
        <name>ATP</name>
        <dbReference type="ChEBI" id="CHEBI:30616"/>
    </ligand>
</feature>
<feature type="binding site" evidence="2">
    <location>
        <position position="128"/>
    </location>
    <ligand>
        <name>Mg(2+)</name>
        <dbReference type="ChEBI" id="CHEBI:18420"/>
    </ligand>
</feature>
<feature type="binding site" evidence="1">
    <location>
        <position position="130"/>
    </location>
    <ligand>
        <name>ATP</name>
        <dbReference type="ChEBI" id="CHEBI:30616"/>
    </ligand>
</feature>
<feature type="binding site" evidence="2">
    <location>
        <position position="130"/>
    </location>
    <ligand>
        <name>Mg(2+)</name>
        <dbReference type="ChEBI" id="CHEBI:18420"/>
    </ligand>
</feature>
<feature type="binding site" evidence="2">
    <location>
        <position position="139"/>
    </location>
    <ligand>
        <name>Mg(2+)</name>
        <dbReference type="ChEBI" id="CHEBI:18420"/>
    </ligand>
</feature>
<feature type="binding site" evidence="2">
    <location>
        <position position="143"/>
    </location>
    <ligand>
        <name>Mg(2+)</name>
        <dbReference type="ChEBI" id="CHEBI:18420"/>
    </ligand>
</feature>
<gene>
    <name type="primary">PRPS2</name>
</gene>
<sequence>MPNIVLFSGSSHQDLSQRVADRLGLELGKVVTKKFSNQETSVEIGESVRGEDVYIIQSGCGEINDNLMELLIMINACKIASSSRVTAVIPCFPYARQDKKDKSRAPISAKLVANMLSVAGADHIITMDLHASQIQGFFDIPVDNLYAEPAVLQWIRENIAEWKNCIIVSPDAGGAKRVTSIADRLNVEFALIHKERKKANEVDRMVLVGDVKDRVAILVDDMADTCGTICHAADKLLSAGATKVYAILTHGIFSGPAISRINNAAFEAVVVTNTIPQEDKMKHCTKIQVIDISMILAEAIRRTHNGESVSYLFSHVPL</sequence>
<evidence type="ECO:0000250" key="1"/>
<evidence type="ECO:0000255" key="2"/>
<evidence type="ECO:0000305" key="3"/>
<comment type="function">
    <text>Catalyzes the synthesis of phosphoribosylpyrophosphate (PRPP) that is essential for nucleotide synthesis.</text>
</comment>
<comment type="catalytic activity">
    <reaction>
        <text>D-ribose 5-phosphate + ATP = 5-phospho-alpha-D-ribose 1-diphosphate + AMP + H(+)</text>
        <dbReference type="Rhea" id="RHEA:15609"/>
        <dbReference type="ChEBI" id="CHEBI:15378"/>
        <dbReference type="ChEBI" id="CHEBI:30616"/>
        <dbReference type="ChEBI" id="CHEBI:58017"/>
        <dbReference type="ChEBI" id="CHEBI:78346"/>
        <dbReference type="ChEBI" id="CHEBI:456215"/>
        <dbReference type="EC" id="2.7.6.1"/>
    </reaction>
</comment>
<comment type="cofactor">
    <cofactor evidence="1">
        <name>Mg(2+)</name>
        <dbReference type="ChEBI" id="CHEBI:18420"/>
    </cofactor>
</comment>
<comment type="activity regulation">
    <text>Activated by magnesium and inorganic phosphate.</text>
</comment>
<comment type="pathway">
    <text>Metabolic intermediate biosynthesis; 5-phospho-alpha-D-ribose 1-diphosphate biosynthesis; 5-phospho-alpha-D-ribose 1-diphosphate from D-ribose 5-phosphate (route I): step 1/1.</text>
</comment>
<comment type="subunit">
    <text evidence="1">Homodimer. The active form is probably a hexamer composed of 3 homodimers (By similarity).</text>
</comment>
<comment type="similarity">
    <text evidence="3">Belongs to the ribose-phosphate pyrophosphokinase family.</text>
</comment>
<organism>
    <name type="scientific">Pongo abelii</name>
    <name type="common">Sumatran orangutan</name>
    <name type="synonym">Pongo pygmaeus abelii</name>
    <dbReference type="NCBI Taxonomy" id="9601"/>
    <lineage>
        <taxon>Eukaryota</taxon>
        <taxon>Metazoa</taxon>
        <taxon>Chordata</taxon>
        <taxon>Craniata</taxon>
        <taxon>Vertebrata</taxon>
        <taxon>Euteleostomi</taxon>
        <taxon>Mammalia</taxon>
        <taxon>Eutheria</taxon>
        <taxon>Euarchontoglires</taxon>
        <taxon>Primates</taxon>
        <taxon>Haplorrhini</taxon>
        <taxon>Catarrhini</taxon>
        <taxon>Hominidae</taxon>
        <taxon>Pongo</taxon>
    </lineage>
</organism>
<proteinExistence type="evidence at transcript level"/>